<sequence length="210" mass="22351">MPPELTPTRRSILQATLRLGAGATAGQVAQEVGITKQAISQQVNILRKLGYLQPAETRYGPLQVTDRARAALGEGLPIYGQIAAGIPALAEQSPEDFTPSIEALLGLKAGDFLLRVRGESMTGIGVMDGDYVVVRPAPEVHDGEVAVVLVPGDNAATLKRLYHFGQDILLTSENPAMPRLSFPAEQVQVQGRMVGRVGVGAPRVSHRVTE</sequence>
<comment type="function">
    <text evidence="1">Represses a number of genes involved in the response to DNA damage (SOS response), including recA and lexA. In the presence of single-stranded DNA, RecA interacts with LexA causing an autocatalytic cleavage which disrupts the DNA-binding part of LexA, leading to derepression of the SOS regulon and eventually DNA repair.</text>
</comment>
<comment type="catalytic activity">
    <reaction evidence="1">
        <text>Hydrolysis of Ala-|-Gly bond in repressor LexA.</text>
        <dbReference type="EC" id="3.4.21.88"/>
    </reaction>
</comment>
<comment type="subunit">
    <text evidence="1">Homodimer.</text>
</comment>
<comment type="similarity">
    <text evidence="1">Belongs to the peptidase S24 family.</text>
</comment>
<comment type="sequence caution" evidence="2">
    <conflict type="erroneous initiation">
        <sequence resource="EMBL-CDS" id="AAF12438"/>
    </conflict>
</comment>
<feature type="chain" id="PRO_0000170030" description="LexA repressor">
    <location>
        <begin position="1"/>
        <end position="210"/>
    </location>
</feature>
<feature type="DNA-binding region" description="H-T-H motif" evidence="1">
    <location>
        <begin position="25"/>
        <end position="44"/>
    </location>
</feature>
<feature type="active site" description="For autocatalytic cleavage activity" evidence="1">
    <location>
        <position position="120"/>
    </location>
</feature>
<feature type="active site" description="For autocatalytic cleavage activity" evidence="1">
    <location>
        <position position="159"/>
    </location>
</feature>
<feature type="site" description="Cleavage; by autolysis" evidence="1">
    <location>
        <begin position="84"/>
        <end position="85"/>
    </location>
</feature>
<dbReference type="EC" id="3.4.21.88" evidence="1"/>
<dbReference type="EMBL" id="AB003475">
    <property type="protein sequence ID" value="BAA21376.1"/>
    <property type="molecule type" value="Genomic_DNA"/>
</dbReference>
<dbReference type="EMBL" id="AE001825">
    <property type="protein sequence ID" value="AAF12438.1"/>
    <property type="status" value="ALT_INIT"/>
    <property type="molecule type" value="Genomic_DNA"/>
</dbReference>
<dbReference type="PIR" id="D75589">
    <property type="entry name" value="D75589"/>
</dbReference>
<dbReference type="RefSeq" id="NP_285667.1">
    <property type="nucleotide sequence ID" value="NC_001264.1"/>
</dbReference>
<dbReference type="RefSeq" id="WP_027479703.1">
    <property type="nucleotide sequence ID" value="NC_001264.1"/>
</dbReference>
<dbReference type="SMR" id="O32506"/>
<dbReference type="FunCoup" id="O32506">
    <property type="interactions" value="261"/>
</dbReference>
<dbReference type="STRING" id="243230.DR_A0344"/>
<dbReference type="MEROPS" id="S24.001"/>
<dbReference type="PaxDb" id="243230-DR_A0344"/>
<dbReference type="EnsemblBacteria" id="AAF12438">
    <property type="protein sequence ID" value="AAF12438"/>
    <property type="gene ID" value="DR_A0344"/>
</dbReference>
<dbReference type="GeneID" id="69519230"/>
<dbReference type="KEGG" id="dra:DR_A0344"/>
<dbReference type="PATRIC" id="fig|243230.17.peg.3236"/>
<dbReference type="eggNOG" id="COG1974">
    <property type="taxonomic scope" value="Bacteria"/>
</dbReference>
<dbReference type="HOGENOM" id="CLU_066192_45_1_0"/>
<dbReference type="InParanoid" id="O32506"/>
<dbReference type="OrthoDB" id="194368at2"/>
<dbReference type="Proteomes" id="UP000002524">
    <property type="component" value="Chromosome 2"/>
</dbReference>
<dbReference type="GO" id="GO:0032993">
    <property type="term" value="C:protein-DNA complex"/>
    <property type="evidence" value="ECO:0000318"/>
    <property type="project" value="GO_Central"/>
</dbReference>
<dbReference type="GO" id="GO:0001217">
    <property type="term" value="F:DNA-binding transcription repressor activity"/>
    <property type="evidence" value="ECO:0000318"/>
    <property type="project" value="GO_Central"/>
</dbReference>
<dbReference type="GO" id="GO:0043565">
    <property type="term" value="F:sequence-specific DNA binding"/>
    <property type="evidence" value="ECO:0000318"/>
    <property type="project" value="GO_Central"/>
</dbReference>
<dbReference type="GO" id="GO:0004252">
    <property type="term" value="F:serine-type endopeptidase activity"/>
    <property type="evidence" value="ECO:0007669"/>
    <property type="project" value="UniProtKB-UniRule"/>
</dbReference>
<dbReference type="GO" id="GO:0006281">
    <property type="term" value="P:DNA repair"/>
    <property type="evidence" value="ECO:0007669"/>
    <property type="project" value="UniProtKB-UniRule"/>
</dbReference>
<dbReference type="GO" id="GO:0006260">
    <property type="term" value="P:DNA replication"/>
    <property type="evidence" value="ECO:0007669"/>
    <property type="project" value="UniProtKB-UniRule"/>
</dbReference>
<dbReference type="GO" id="GO:0045892">
    <property type="term" value="P:negative regulation of DNA-templated transcription"/>
    <property type="evidence" value="ECO:0000318"/>
    <property type="project" value="GO_Central"/>
</dbReference>
<dbReference type="GO" id="GO:0009432">
    <property type="term" value="P:SOS response"/>
    <property type="evidence" value="ECO:0000318"/>
    <property type="project" value="GO_Central"/>
</dbReference>
<dbReference type="CDD" id="cd00090">
    <property type="entry name" value="HTH_ARSR"/>
    <property type="match status" value="1"/>
</dbReference>
<dbReference type="CDD" id="cd06529">
    <property type="entry name" value="S24_LexA-like"/>
    <property type="match status" value="1"/>
</dbReference>
<dbReference type="Gene3D" id="2.10.109.10">
    <property type="entry name" value="Umud Fragment, subunit A"/>
    <property type="match status" value="1"/>
</dbReference>
<dbReference type="Gene3D" id="1.10.10.10">
    <property type="entry name" value="Winged helix-like DNA-binding domain superfamily/Winged helix DNA-binding domain"/>
    <property type="match status" value="1"/>
</dbReference>
<dbReference type="HAMAP" id="MF_00015">
    <property type="entry name" value="LexA"/>
    <property type="match status" value="1"/>
</dbReference>
<dbReference type="InterPro" id="IPR011991">
    <property type="entry name" value="ArsR-like_HTH"/>
</dbReference>
<dbReference type="InterPro" id="IPR006200">
    <property type="entry name" value="LexA"/>
</dbReference>
<dbReference type="InterPro" id="IPR039418">
    <property type="entry name" value="LexA-like"/>
</dbReference>
<dbReference type="InterPro" id="IPR036286">
    <property type="entry name" value="LexA/Signal_pep-like_sf"/>
</dbReference>
<dbReference type="InterPro" id="IPR050077">
    <property type="entry name" value="LexA_repressor"/>
</dbReference>
<dbReference type="InterPro" id="IPR006197">
    <property type="entry name" value="Peptidase_S24_LexA"/>
</dbReference>
<dbReference type="InterPro" id="IPR015927">
    <property type="entry name" value="Peptidase_S24_S26A/B/C"/>
</dbReference>
<dbReference type="InterPro" id="IPR036388">
    <property type="entry name" value="WH-like_DNA-bd_sf"/>
</dbReference>
<dbReference type="InterPro" id="IPR036390">
    <property type="entry name" value="WH_DNA-bd_sf"/>
</dbReference>
<dbReference type="NCBIfam" id="TIGR00498">
    <property type="entry name" value="lexA"/>
    <property type="match status" value="1"/>
</dbReference>
<dbReference type="PANTHER" id="PTHR33516">
    <property type="entry name" value="LEXA REPRESSOR"/>
    <property type="match status" value="1"/>
</dbReference>
<dbReference type="PANTHER" id="PTHR33516:SF2">
    <property type="entry name" value="LEXA REPRESSOR-RELATED"/>
    <property type="match status" value="1"/>
</dbReference>
<dbReference type="Pfam" id="PF12840">
    <property type="entry name" value="HTH_20"/>
    <property type="match status" value="1"/>
</dbReference>
<dbReference type="Pfam" id="PF00717">
    <property type="entry name" value="Peptidase_S24"/>
    <property type="match status" value="1"/>
</dbReference>
<dbReference type="PRINTS" id="PR00726">
    <property type="entry name" value="LEXASERPTASE"/>
</dbReference>
<dbReference type="SUPFAM" id="SSF51306">
    <property type="entry name" value="LexA/Signal peptidase"/>
    <property type="match status" value="1"/>
</dbReference>
<dbReference type="SUPFAM" id="SSF46785">
    <property type="entry name" value="Winged helix' DNA-binding domain"/>
    <property type="match status" value="1"/>
</dbReference>
<name>LEXA_DEIRA</name>
<protein>
    <recommendedName>
        <fullName evidence="1">LexA repressor</fullName>
        <ecNumber evidence="1">3.4.21.88</ecNumber>
    </recommendedName>
</protein>
<keyword id="KW-0068">Autocatalytic cleavage</keyword>
<keyword id="KW-0227">DNA damage</keyword>
<keyword id="KW-0234">DNA repair</keyword>
<keyword id="KW-0235">DNA replication</keyword>
<keyword id="KW-0238">DNA-binding</keyword>
<keyword id="KW-0378">Hydrolase</keyword>
<keyword id="KW-1185">Reference proteome</keyword>
<keyword id="KW-0678">Repressor</keyword>
<keyword id="KW-0742">SOS response</keyword>
<keyword id="KW-0804">Transcription</keyword>
<keyword id="KW-0805">Transcription regulation</keyword>
<evidence type="ECO:0000255" key="1">
    <source>
        <dbReference type="HAMAP-Rule" id="MF_00015"/>
    </source>
</evidence>
<evidence type="ECO:0000305" key="2"/>
<accession>O32506</accession>
<gene>
    <name evidence="1" type="primary">lexA</name>
    <name type="ordered locus">DR_A0344</name>
</gene>
<reference key="1">
    <citation type="submission" date="1997-04" db="EMBL/GenBank/DDBJ databases">
        <title>Cloning, sequencing and expression of the lexA-like gene of Deinococcus radiodurans.</title>
        <authorList>
            <person name="Narumi I."/>
            <person name="Kong X."/>
            <person name="Du Z."/>
            <person name="Cherdchu K."/>
            <person name="Kitayama S."/>
            <person name="Watanabe H."/>
        </authorList>
    </citation>
    <scope>NUCLEOTIDE SEQUENCE [GENOMIC DNA]</scope>
    <source>
        <strain>KD8301</strain>
    </source>
</reference>
<reference key="2">
    <citation type="journal article" date="1999" name="Science">
        <title>Genome sequence of the radioresistant bacterium Deinococcus radiodurans R1.</title>
        <authorList>
            <person name="White O."/>
            <person name="Eisen J.A."/>
            <person name="Heidelberg J.F."/>
            <person name="Hickey E.K."/>
            <person name="Peterson J.D."/>
            <person name="Dodson R.J."/>
            <person name="Haft D.H."/>
            <person name="Gwinn M.L."/>
            <person name="Nelson W.C."/>
            <person name="Richardson D.L."/>
            <person name="Moffat K.S."/>
            <person name="Qin H."/>
            <person name="Jiang L."/>
            <person name="Pamphile W."/>
            <person name="Crosby M."/>
            <person name="Shen M."/>
            <person name="Vamathevan J.J."/>
            <person name="Lam P."/>
            <person name="McDonald L.A."/>
            <person name="Utterback T.R."/>
            <person name="Zalewski C."/>
            <person name="Makarova K.S."/>
            <person name="Aravind L."/>
            <person name="Daly M.J."/>
            <person name="Minton K.W."/>
            <person name="Fleischmann R.D."/>
            <person name="Ketchum K.A."/>
            <person name="Nelson K.E."/>
            <person name="Salzberg S.L."/>
            <person name="Smith H.O."/>
            <person name="Venter J.C."/>
            <person name="Fraser C.M."/>
        </authorList>
    </citation>
    <scope>NUCLEOTIDE SEQUENCE [LARGE SCALE GENOMIC DNA]</scope>
    <source>
        <strain>ATCC 13939 / DSM 20539 / JCM 16871 / CCUG 27074 / LMG 4051 / NBRC 15346 / NCIMB 9279 / VKM B-1422 / R1</strain>
    </source>
</reference>
<organism>
    <name type="scientific">Deinococcus radiodurans (strain ATCC 13939 / DSM 20539 / JCM 16871 / CCUG 27074 / LMG 4051 / NBRC 15346 / NCIMB 9279 / VKM B-1422 / R1)</name>
    <dbReference type="NCBI Taxonomy" id="243230"/>
    <lineage>
        <taxon>Bacteria</taxon>
        <taxon>Thermotogati</taxon>
        <taxon>Deinococcota</taxon>
        <taxon>Deinococci</taxon>
        <taxon>Deinococcales</taxon>
        <taxon>Deinococcaceae</taxon>
        <taxon>Deinococcus</taxon>
    </lineage>
</organism>
<proteinExistence type="inferred from homology"/>